<feature type="chain" id="PRO_0000179261" description="UDP-N-acetylenolpyruvoylglucosamine reductase">
    <location>
        <begin position="1"/>
        <end position="307"/>
    </location>
</feature>
<feature type="domain" description="FAD-binding PCMH-type" evidence="1">
    <location>
        <begin position="33"/>
        <end position="197"/>
    </location>
</feature>
<feature type="active site">
    <location>
        <position position="176"/>
    </location>
</feature>
<feature type="active site" description="Proton donor">
    <location>
        <position position="226"/>
    </location>
</feature>
<feature type="active site">
    <location>
        <position position="296"/>
    </location>
</feature>
<feature type="helix" evidence="2">
    <location>
        <begin position="4"/>
        <end position="13"/>
    </location>
</feature>
<feature type="helix" evidence="2">
    <location>
        <begin position="16"/>
        <end position="18"/>
    </location>
</feature>
<feature type="strand" evidence="2">
    <location>
        <begin position="19"/>
        <end position="24"/>
    </location>
</feature>
<feature type="helix" evidence="2">
    <location>
        <begin position="25"/>
        <end position="27"/>
    </location>
</feature>
<feature type="strand" evidence="2">
    <location>
        <begin position="36"/>
        <end position="41"/>
    </location>
</feature>
<feature type="helix" evidence="2">
    <location>
        <begin position="46"/>
        <end position="58"/>
    </location>
</feature>
<feature type="strand" evidence="2">
    <location>
        <begin position="63"/>
        <end position="68"/>
    </location>
</feature>
<feature type="strand" evidence="2">
    <location>
        <begin position="70"/>
        <end position="74"/>
    </location>
</feature>
<feature type="strand" evidence="2">
    <location>
        <begin position="79"/>
        <end position="85"/>
    </location>
</feature>
<feature type="strand" evidence="2">
    <location>
        <begin position="92"/>
        <end position="95"/>
    </location>
</feature>
<feature type="strand" evidence="2">
    <location>
        <begin position="98"/>
        <end position="102"/>
    </location>
</feature>
<feature type="helix" evidence="2">
    <location>
        <begin position="107"/>
        <end position="116"/>
    </location>
</feature>
<feature type="strand" evidence="2">
    <location>
        <begin position="119"/>
        <end position="121"/>
    </location>
</feature>
<feature type="helix" evidence="2">
    <location>
        <begin position="123"/>
        <end position="125"/>
    </location>
</feature>
<feature type="helix" evidence="2">
    <location>
        <begin position="132"/>
        <end position="138"/>
    </location>
</feature>
<feature type="helix" evidence="2">
    <location>
        <begin position="147"/>
        <end position="150"/>
    </location>
</feature>
<feature type="strand" evidence="2">
    <location>
        <begin position="151"/>
        <end position="157"/>
    </location>
</feature>
<feature type="strand" evidence="2">
    <location>
        <begin position="163"/>
        <end position="167"/>
    </location>
</feature>
<feature type="turn" evidence="2">
    <location>
        <begin position="168"/>
        <end position="172"/>
    </location>
</feature>
<feature type="helix" evidence="2">
    <location>
        <begin position="179"/>
        <end position="182"/>
    </location>
</feature>
<feature type="strand" evidence="2">
    <location>
        <begin position="186"/>
        <end position="193"/>
    </location>
</feature>
<feature type="helix" evidence="2">
    <location>
        <begin position="199"/>
        <end position="216"/>
    </location>
</feature>
<feature type="helix" evidence="2">
    <location>
        <begin position="236"/>
        <end position="242"/>
    </location>
</feature>
<feature type="strand" evidence="2">
    <location>
        <begin position="253"/>
        <end position="255"/>
    </location>
</feature>
<feature type="strand" evidence="2">
    <location>
        <begin position="263"/>
        <end position="265"/>
    </location>
</feature>
<feature type="helix" evidence="2">
    <location>
        <begin position="271"/>
        <end position="289"/>
    </location>
</feature>
<feature type="strand" evidence="2">
    <location>
        <begin position="297"/>
        <end position="301"/>
    </location>
</feature>
<dbReference type="EC" id="1.3.1.98" evidence="1"/>
<dbReference type="EMBL" id="AF300988">
    <property type="protein sequence ID" value="AAK97215.1"/>
    <property type="molecule type" value="Genomic_DNA"/>
</dbReference>
<dbReference type="RefSeq" id="WP_000608440.1">
    <property type="nucleotide sequence ID" value="NZ_WWFR01000001.1"/>
</dbReference>
<dbReference type="PDB" id="1HSK">
    <property type="method" value="X-ray"/>
    <property type="resolution" value="2.30 A"/>
    <property type="chains" value="A=2-307"/>
</dbReference>
<dbReference type="PDBsum" id="1HSK"/>
<dbReference type="SMR" id="P61431"/>
<dbReference type="BindingDB" id="P61431"/>
<dbReference type="ChEMBL" id="CHEMBL4089"/>
<dbReference type="OMA" id="APLTWFR"/>
<dbReference type="BioCyc" id="MetaCyc:MONOMER-12254"/>
<dbReference type="BRENDA" id="1.3.1.98">
    <property type="organism ID" value="3352"/>
</dbReference>
<dbReference type="UniPathway" id="UPA00219"/>
<dbReference type="EvolutionaryTrace" id="P61431"/>
<dbReference type="PRO" id="PR:P61431"/>
<dbReference type="GO" id="GO:0005829">
    <property type="term" value="C:cytosol"/>
    <property type="evidence" value="ECO:0007669"/>
    <property type="project" value="TreeGrafter"/>
</dbReference>
<dbReference type="GO" id="GO:0071949">
    <property type="term" value="F:FAD binding"/>
    <property type="evidence" value="ECO:0007669"/>
    <property type="project" value="InterPro"/>
</dbReference>
<dbReference type="GO" id="GO:0008762">
    <property type="term" value="F:UDP-N-acetylmuramate dehydrogenase activity"/>
    <property type="evidence" value="ECO:0007669"/>
    <property type="project" value="UniProtKB-UniRule"/>
</dbReference>
<dbReference type="GO" id="GO:0051301">
    <property type="term" value="P:cell division"/>
    <property type="evidence" value="ECO:0007669"/>
    <property type="project" value="UniProtKB-KW"/>
</dbReference>
<dbReference type="GO" id="GO:0071555">
    <property type="term" value="P:cell wall organization"/>
    <property type="evidence" value="ECO:0007669"/>
    <property type="project" value="UniProtKB-KW"/>
</dbReference>
<dbReference type="GO" id="GO:0009252">
    <property type="term" value="P:peptidoglycan biosynthetic process"/>
    <property type="evidence" value="ECO:0007669"/>
    <property type="project" value="UniProtKB-UniRule"/>
</dbReference>
<dbReference type="GO" id="GO:0008360">
    <property type="term" value="P:regulation of cell shape"/>
    <property type="evidence" value="ECO:0007669"/>
    <property type="project" value="UniProtKB-KW"/>
</dbReference>
<dbReference type="FunFam" id="3.90.78.10:FF:000001">
    <property type="entry name" value="UDP-N-acetylenolpyruvoylglucosamine reductase"/>
    <property type="match status" value="1"/>
</dbReference>
<dbReference type="Gene3D" id="3.30.465.10">
    <property type="match status" value="1"/>
</dbReference>
<dbReference type="Gene3D" id="3.90.78.10">
    <property type="entry name" value="UDP-N-acetylenolpyruvoylglucosamine reductase, C-terminal domain"/>
    <property type="match status" value="1"/>
</dbReference>
<dbReference type="Gene3D" id="3.30.43.10">
    <property type="entry name" value="Uridine Diphospho-n-acetylenolpyruvylglucosamine Reductase, domain 2"/>
    <property type="match status" value="1"/>
</dbReference>
<dbReference type="HAMAP" id="MF_00037">
    <property type="entry name" value="MurB"/>
    <property type="match status" value="1"/>
</dbReference>
<dbReference type="InterPro" id="IPR016166">
    <property type="entry name" value="FAD-bd_PCMH"/>
</dbReference>
<dbReference type="InterPro" id="IPR036318">
    <property type="entry name" value="FAD-bd_PCMH-like_sf"/>
</dbReference>
<dbReference type="InterPro" id="IPR016167">
    <property type="entry name" value="FAD-bd_PCMH_sub1"/>
</dbReference>
<dbReference type="InterPro" id="IPR016169">
    <property type="entry name" value="FAD-bd_PCMH_sub2"/>
</dbReference>
<dbReference type="InterPro" id="IPR003170">
    <property type="entry name" value="MurB"/>
</dbReference>
<dbReference type="InterPro" id="IPR011601">
    <property type="entry name" value="MurB_C"/>
</dbReference>
<dbReference type="InterPro" id="IPR036635">
    <property type="entry name" value="MurB_C_sf"/>
</dbReference>
<dbReference type="InterPro" id="IPR006094">
    <property type="entry name" value="Oxid_FAD_bind_N"/>
</dbReference>
<dbReference type="NCBIfam" id="TIGR00179">
    <property type="entry name" value="murB"/>
    <property type="match status" value="1"/>
</dbReference>
<dbReference type="NCBIfam" id="NF010480">
    <property type="entry name" value="PRK13905.1"/>
    <property type="match status" value="1"/>
</dbReference>
<dbReference type="PANTHER" id="PTHR21071">
    <property type="entry name" value="UDP-N-ACETYLENOLPYRUVOYLGLUCOSAMINE REDUCTASE"/>
    <property type="match status" value="1"/>
</dbReference>
<dbReference type="PANTHER" id="PTHR21071:SF4">
    <property type="entry name" value="UDP-N-ACETYLENOLPYRUVOYLGLUCOSAMINE REDUCTASE"/>
    <property type="match status" value="1"/>
</dbReference>
<dbReference type="Pfam" id="PF01565">
    <property type="entry name" value="FAD_binding_4"/>
    <property type="match status" value="1"/>
</dbReference>
<dbReference type="Pfam" id="PF02873">
    <property type="entry name" value="MurB_C"/>
    <property type="match status" value="1"/>
</dbReference>
<dbReference type="SUPFAM" id="SSF56176">
    <property type="entry name" value="FAD-binding/transporter-associated domain-like"/>
    <property type="match status" value="1"/>
</dbReference>
<dbReference type="SUPFAM" id="SSF56194">
    <property type="entry name" value="Uridine diphospho-N-Acetylenolpyruvylglucosamine reductase, MurB, C-terminal domain"/>
    <property type="match status" value="1"/>
</dbReference>
<dbReference type="PROSITE" id="PS51387">
    <property type="entry name" value="FAD_PCMH"/>
    <property type="match status" value="1"/>
</dbReference>
<keyword id="KW-0002">3D-structure</keyword>
<keyword id="KW-0131">Cell cycle</keyword>
<keyword id="KW-0132">Cell division</keyword>
<keyword id="KW-0133">Cell shape</keyword>
<keyword id="KW-0961">Cell wall biogenesis/degradation</keyword>
<keyword id="KW-0963">Cytoplasm</keyword>
<keyword id="KW-0274">FAD</keyword>
<keyword id="KW-0285">Flavoprotein</keyword>
<keyword id="KW-0521">NADP</keyword>
<keyword id="KW-0560">Oxidoreductase</keyword>
<keyword id="KW-0573">Peptidoglycan synthesis</keyword>
<proteinExistence type="evidence at protein level"/>
<protein>
    <recommendedName>
        <fullName evidence="1">UDP-N-acetylenolpyruvoylglucosamine reductase</fullName>
        <ecNumber evidence="1">1.3.1.98</ecNumber>
    </recommendedName>
    <alternativeName>
        <fullName evidence="1">UDP-N-acetylmuramate dehydrogenase</fullName>
    </alternativeName>
</protein>
<accession>P61431</accession>
<accession>Q93G02</accession>
<reference key="1">
    <citation type="journal article" date="2001" name="Biochemistry">
        <title>A structural variation for MurB: X-ray crystal structure of Staphylococcus aureus UDP-N-acetylenolpyruvylglucosamine reductase (MurB).</title>
        <authorList>
            <person name="Benson T.E."/>
            <person name="Harris M.S."/>
            <person name="Choi G.H."/>
            <person name="Cialdella J.I."/>
            <person name="Herberg J.T."/>
            <person name="Martin J.P. Jr."/>
            <person name="Baldwin E.T."/>
        </authorList>
    </citation>
    <scope>NUCLEOTIDE SEQUENCE [GENOMIC DNA]</scope>
    <scope>X-RAY CRYSTALLOGRAPHY (2.3 ANGSTROMS)</scope>
    <source>
        <strain>ISP3</strain>
    </source>
</reference>
<sequence length="307" mass="33797">MINKDIYQALQQLIPNEKIKVDEPLKRYTYTKTGGNADFYITPTKNEEVQAVVKYAYQNEIPVTYLGNGSNIIIREGGIRGIVISLLSLDHIEVSDDAIIAGSGAAIIDVSRVARDYALTGLEFACGIPGSIGGAVYMNAGAYGGEVKDCIDYALCVNEQGSLIKLTTKELELDYRNSIIQKEHLVVLEAAFTLAPGKMTEIQAKMDDLTERRESKQPLEYPSCGSVFQRPPGHFAGKLIQDSNLQGHRIGGVEVSTKHAGFMVNVDNGTATDYENLIHYVQKTVKEKFGIELNREVRIIGEHPKES</sequence>
<organism>
    <name type="scientific">Staphylococcus aureus</name>
    <dbReference type="NCBI Taxonomy" id="1280"/>
    <lineage>
        <taxon>Bacteria</taxon>
        <taxon>Bacillati</taxon>
        <taxon>Bacillota</taxon>
        <taxon>Bacilli</taxon>
        <taxon>Bacillales</taxon>
        <taxon>Staphylococcaceae</taxon>
        <taxon>Staphylococcus</taxon>
    </lineage>
</organism>
<evidence type="ECO:0000255" key="1">
    <source>
        <dbReference type="HAMAP-Rule" id="MF_00037"/>
    </source>
</evidence>
<evidence type="ECO:0007829" key="2">
    <source>
        <dbReference type="PDB" id="1HSK"/>
    </source>
</evidence>
<name>MURB_STAAU</name>
<gene>
    <name evidence="1" type="primary">murB</name>
</gene>
<comment type="function">
    <text>Cell wall formation.</text>
</comment>
<comment type="catalytic activity">
    <reaction evidence="1">
        <text>UDP-N-acetyl-alpha-D-muramate + NADP(+) = UDP-N-acetyl-3-O-(1-carboxyvinyl)-alpha-D-glucosamine + NADPH + H(+)</text>
        <dbReference type="Rhea" id="RHEA:12248"/>
        <dbReference type="ChEBI" id="CHEBI:15378"/>
        <dbReference type="ChEBI" id="CHEBI:57783"/>
        <dbReference type="ChEBI" id="CHEBI:58349"/>
        <dbReference type="ChEBI" id="CHEBI:68483"/>
        <dbReference type="ChEBI" id="CHEBI:70757"/>
        <dbReference type="EC" id="1.3.1.98"/>
    </reaction>
</comment>
<comment type="cofactor">
    <cofactor>
        <name>FAD</name>
        <dbReference type="ChEBI" id="CHEBI:57692"/>
    </cofactor>
</comment>
<comment type="pathway">
    <text evidence="1">Cell wall biogenesis; peptidoglycan biosynthesis.</text>
</comment>
<comment type="subcellular location">
    <subcellularLocation>
        <location evidence="1">Cytoplasm</location>
    </subcellularLocation>
</comment>
<comment type="similarity">
    <text evidence="1">Belongs to the MurB family.</text>
</comment>